<sequence length="495" mass="52111">MTGGALLVAGTTSDAGKSMVVAGLCRLLARKGVRVAPFKAQNMSNNSAVTVDGGEIGRAQAMQARAAGLDPSVRFNPVLLKPGSDRTSQLVVRGRVTGTVSATDYITHRDRLADVVADELASLRAEFDVVLCEGAGSPAEINLRRTDLANMGLARRAHLPVIVVGDIDRGGVLAHLFGTVAVLHPDDQALIAGFVVNKFRGDPTLLAPGLDQLHDLTGRPTYGVIPYSDELWMDTEDSVSVVAGRTIGRPTPPRGADGLRVAAVRLPRISNSTDIEALACEPGVTVRWVTDPADVADADVVVLPGTKATVADLQWLRTAGLAEPIAAHAGAGRPLLGICGGFQMLCRHIDDAVESRAGRVDGLGLLDADIAFAAEKTLRHRTTPLQGYEIHHGQVTRCAADDWAGIGVRRDAVYGTHWHGLFDNDGFRRAWLADAAAAAGRSGFVVADDIDVSARRDAQLDVMADLLQNHLDLDAALGLVDAGPPPRPTISTGIT</sequence>
<gene>
    <name evidence="1" type="primary">cobQ</name>
    <name type="ordered locus">Mmcs_2051</name>
</gene>
<organism>
    <name type="scientific">Mycobacterium sp. (strain MCS)</name>
    <dbReference type="NCBI Taxonomy" id="164756"/>
    <lineage>
        <taxon>Bacteria</taxon>
        <taxon>Bacillati</taxon>
        <taxon>Actinomycetota</taxon>
        <taxon>Actinomycetes</taxon>
        <taxon>Mycobacteriales</taxon>
        <taxon>Mycobacteriaceae</taxon>
        <taxon>Mycobacterium</taxon>
    </lineage>
</organism>
<comment type="function">
    <text evidence="1">Catalyzes amidations at positions B, D, E, and G on adenosylcobyrinic A,C-diamide. NH(2) groups are provided by glutamine, and one molecule of ATP is hydrogenolyzed for each amidation.</text>
</comment>
<comment type="pathway">
    <text evidence="1">Cofactor biosynthesis; adenosylcobalamin biosynthesis.</text>
</comment>
<comment type="similarity">
    <text evidence="1">Belongs to the CobB/CobQ family. CobQ subfamily.</text>
</comment>
<keyword id="KW-0169">Cobalamin biosynthesis</keyword>
<keyword id="KW-0315">Glutamine amidotransferase</keyword>
<accession>Q1BAC5</accession>
<name>COBQ_MYCSS</name>
<reference key="1">
    <citation type="submission" date="2006-06" db="EMBL/GenBank/DDBJ databases">
        <title>Complete sequence of chromosome of Mycobacterium sp. MCS.</title>
        <authorList>
            <consortium name="US DOE Joint Genome Institute"/>
            <person name="Copeland A."/>
            <person name="Lucas S."/>
            <person name="Lapidus A."/>
            <person name="Barry K."/>
            <person name="Detter J.C."/>
            <person name="Glavina del Rio T."/>
            <person name="Hammon N."/>
            <person name="Israni S."/>
            <person name="Dalin E."/>
            <person name="Tice H."/>
            <person name="Pitluck S."/>
            <person name="Martinez M."/>
            <person name="Schmutz J."/>
            <person name="Larimer F."/>
            <person name="Land M."/>
            <person name="Hauser L."/>
            <person name="Kyrpides N."/>
            <person name="Kim E."/>
            <person name="Miller C.D."/>
            <person name="Hughes J.E."/>
            <person name="Anderson A.J."/>
            <person name="Sims R.C."/>
            <person name="Richardson P."/>
        </authorList>
    </citation>
    <scope>NUCLEOTIDE SEQUENCE [LARGE SCALE GENOMIC DNA]</scope>
    <source>
        <strain>MCS</strain>
    </source>
</reference>
<protein>
    <recommendedName>
        <fullName evidence="1">Cobyric acid synthase</fullName>
    </recommendedName>
</protein>
<proteinExistence type="inferred from homology"/>
<evidence type="ECO:0000255" key="1">
    <source>
        <dbReference type="HAMAP-Rule" id="MF_00028"/>
    </source>
</evidence>
<dbReference type="EMBL" id="CP000384">
    <property type="protein sequence ID" value="ABG08159.1"/>
    <property type="molecule type" value="Genomic_DNA"/>
</dbReference>
<dbReference type="SMR" id="Q1BAC5"/>
<dbReference type="KEGG" id="mmc:Mmcs_2051"/>
<dbReference type="HOGENOM" id="CLU_019250_2_2_11"/>
<dbReference type="BioCyc" id="MSP164756:G1G6O-2097-MONOMER"/>
<dbReference type="UniPathway" id="UPA00148"/>
<dbReference type="GO" id="GO:0015420">
    <property type="term" value="F:ABC-type vitamin B12 transporter activity"/>
    <property type="evidence" value="ECO:0007669"/>
    <property type="project" value="UniProtKB-UniRule"/>
</dbReference>
<dbReference type="GO" id="GO:0003824">
    <property type="term" value="F:catalytic activity"/>
    <property type="evidence" value="ECO:0007669"/>
    <property type="project" value="InterPro"/>
</dbReference>
<dbReference type="GO" id="GO:0009236">
    <property type="term" value="P:cobalamin biosynthetic process"/>
    <property type="evidence" value="ECO:0007669"/>
    <property type="project" value="UniProtKB-UniRule"/>
</dbReference>
<dbReference type="CDD" id="cd05389">
    <property type="entry name" value="CobQ_N"/>
    <property type="match status" value="1"/>
</dbReference>
<dbReference type="CDD" id="cd01750">
    <property type="entry name" value="GATase1_CobQ"/>
    <property type="match status" value="1"/>
</dbReference>
<dbReference type="Gene3D" id="3.40.50.880">
    <property type="match status" value="1"/>
</dbReference>
<dbReference type="Gene3D" id="3.40.50.300">
    <property type="entry name" value="P-loop containing nucleotide triphosphate hydrolases"/>
    <property type="match status" value="1"/>
</dbReference>
<dbReference type="HAMAP" id="MF_00028">
    <property type="entry name" value="CobQ"/>
    <property type="match status" value="1"/>
</dbReference>
<dbReference type="InterPro" id="IPR029062">
    <property type="entry name" value="Class_I_gatase-like"/>
</dbReference>
<dbReference type="InterPro" id="IPR002586">
    <property type="entry name" value="CobQ/CobB/MinD/ParA_Nub-bd_dom"/>
</dbReference>
<dbReference type="InterPro" id="IPR033949">
    <property type="entry name" value="CobQ_GATase1"/>
</dbReference>
<dbReference type="InterPro" id="IPR047045">
    <property type="entry name" value="CobQ_N"/>
</dbReference>
<dbReference type="InterPro" id="IPR004459">
    <property type="entry name" value="CobQ_synth"/>
</dbReference>
<dbReference type="InterPro" id="IPR011698">
    <property type="entry name" value="GATase_3"/>
</dbReference>
<dbReference type="InterPro" id="IPR027417">
    <property type="entry name" value="P-loop_NTPase"/>
</dbReference>
<dbReference type="NCBIfam" id="TIGR00313">
    <property type="entry name" value="cobQ"/>
    <property type="match status" value="1"/>
</dbReference>
<dbReference type="NCBIfam" id="NF001989">
    <property type="entry name" value="PRK00784.1"/>
    <property type="match status" value="1"/>
</dbReference>
<dbReference type="PANTHER" id="PTHR21343:SF1">
    <property type="entry name" value="COBYRIC ACID SYNTHASE"/>
    <property type="match status" value="1"/>
</dbReference>
<dbReference type="PANTHER" id="PTHR21343">
    <property type="entry name" value="DETHIOBIOTIN SYNTHETASE"/>
    <property type="match status" value="1"/>
</dbReference>
<dbReference type="Pfam" id="PF01656">
    <property type="entry name" value="CbiA"/>
    <property type="match status" value="1"/>
</dbReference>
<dbReference type="Pfam" id="PF07685">
    <property type="entry name" value="GATase_3"/>
    <property type="match status" value="1"/>
</dbReference>
<dbReference type="SUPFAM" id="SSF52317">
    <property type="entry name" value="Class I glutamine amidotransferase-like"/>
    <property type="match status" value="1"/>
</dbReference>
<dbReference type="SUPFAM" id="SSF52540">
    <property type="entry name" value="P-loop containing nucleoside triphosphate hydrolases"/>
    <property type="match status" value="1"/>
</dbReference>
<dbReference type="PROSITE" id="PS51274">
    <property type="entry name" value="GATASE_COBBQ"/>
    <property type="match status" value="1"/>
</dbReference>
<feature type="chain" id="PRO_0000332353" description="Cobyric acid synthase">
    <location>
        <begin position="1"/>
        <end position="495"/>
    </location>
</feature>
<feature type="domain" description="GATase cobBQ-type" evidence="1">
    <location>
        <begin position="258"/>
        <end position="427"/>
    </location>
</feature>
<feature type="active site" description="Nucleophile" evidence="1">
    <location>
        <position position="339"/>
    </location>
</feature>
<feature type="active site" evidence="1">
    <location>
        <position position="419"/>
    </location>
</feature>